<dbReference type="EC" id="1.2.1.27" evidence="1"/>
<dbReference type="EMBL" id="CP000002">
    <property type="protein sequence ID" value="AAU23628.1"/>
    <property type="molecule type" value="Genomic_DNA"/>
</dbReference>
<dbReference type="EMBL" id="AE017333">
    <property type="protein sequence ID" value="AAU40993.1"/>
    <property type="molecule type" value="Genomic_DNA"/>
</dbReference>
<dbReference type="RefSeq" id="WP_003182372.1">
    <property type="nucleotide sequence ID" value="NC_006322.1"/>
</dbReference>
<dbReference type="SMR" id="Q65IX1"/>
<dbReference type="STRING" id="279010.BL00293"/>
<dbReference type="KEGG" id="bld:BLi02104"/>
<dbReference type="KEGG" id="bli:BL00293"/>
<dbReference type="eggNOG" id="COG1012">
    <property type="taxonomic scope" value="Bacteria"/>
</dbReference>
<dbReference type="HOGENOM" id="CLU_005391_1_10_9"/>
<dbReference type="UniPathway" id="UPA00076">
    <property type="reaction ID" value="UER00148"/>
</dbReference>
<dbReference type="Proteomes" id="UP000000606">
    <property type="component" value="Chromosome"/>
</dbReference>
<dbReference type="GO" id="GO:0018478">
    <property type="term" value="F:malonate-semialdehyde dehydrogenase (acetylating) activity"/>
    <property type="evidence" value="ECO:0007669"/>
    <property type="project" value="UniProtKB-UniRule"/>
</dbReference>
<dbReference type="GO" id="GO:0004491">
    <property type="term" value="F:methylmalonate-semialdehyde dehydrogenase (acylating, NAD) activity"/>
    <property type="evidence" value="ECO:0007669"/>
    <property type="project" value="UniProtKB-UniRule"/>
</dbReference>
<dbReference type="GO" id="GO:0019310">
    <property type="term" value="P:inositol catabolic process"/>
    <property type="evidence" value="ECO:0007669"/>
    <property type="project" value="UniProtKB-UniRule"/>
</dbReference>
<dbReference type="GO" id="GO:0006210">
    <property type="term" value="P:thymine catabolic process"/>
    <property type="evidence" value="ECO:0007669"/>
    <property type="project" value="TreeGrafter"/>
</dbReference>
<dbReference type="GO" id="GO:0006574">
    <property type="term" value="P:valine catabolic process"/>
    <property type="evidence" value="ECO:0007669"/>
    <property type="project" value="TreeGrafter"/>
</dbReference>
<dbReference type="CDD" id="cd07085">
    <property type="entry name" value="ALDH_F6_MMSDH"/>
    <property type="match status" value="1"/>
</dbReference>
<dbReference type="FunFam" id="3.40.309.10:FF:000002">
    <property type="entry name" value="Methylmalonate-semialdehyde dehydrogenase (Acylating)"/>
    <property type="match status" value="1"/>
</dbReference>
<dbReference type="FunFam" id="3.40.605.10:FF:000003">
    <property type="entry name" value="Methylmalonate-semialdehyde dehydrogenase [acylating]"/>
    <property type="match status" value="1"/>
</dbReference>
<dbReference type="Gene3D" id="3.40.605.10">
    <property type="entry name" value="Aldehyde Dehydrogenase, Chain A, domain 1"/>
    <property type="match status" value="1"/>
</dbReference>
<dbReference type="Gene3D" id="3.40.309.10">
    <property type="entry name" value="Aldehyde Dehydrogenase, Chain A, domain 2"/>
    <property type="match status" value="1"/>
</dbReference>
<dbReference type="HAMAP" id="MF_01670">
    <property type="entry name" value="IolA"/>
    <property type="match status" value="1"/>
</dbReference>
<dbReference type="InterPro" id="IPR016161">
    <property type="entry name" value="Ald_DH/histidinol_DH"/>
</dbReference>
<dbReference type="InterPro" id="IPR016163">
    <property type="entry name" value="Ald_DH_C"/>
</dbReference>
<dbReference type="InterPro" id="IPR016160">
    <property type="entry name" value="Ald_DH_CS_CYS"/>
</dbReference>
<dbReference type="InterPro" id="IPR016162">
    <property type="entry name" value="Ald_DH_N"/>
</dbReference>
<dbReference type="InterPro" id="IPR015590">
    <property type="entry name" value="Aldehyde_DH_dom"/>
</dbReference>
<dbReference type="InterPro" id="IPR010061">
    <property type="entry name" value="MeMal-semiAld_DH"/>
</dbReference>
<dbReference type="InterPro" id="IPR023510">
    <property type="entry name" value="MSDH_GmP_bac"/>
</dbReference>
<dbReference type="NCBIfam" id="TIGR01722">
    <property type="entry name" value="MMSDH"/>
    <property type="match status" value="1"/>
</dbReference>
<dbReference type="PANTHER" id="PTHR43866">
    <property type="entry name" value="MALONATE-SEMIALDEHYDE DEHYDROGENASE"/>
    <property type="match status" value="1"/>
</dbReference>
<dbReference type="PANTHER" id="PTHR43866:SF4">
    <property type="entry name" value="MALONATE-SEMIALDEHYDE DEHYDROGENASE"/>
    <property type="match status" value="1"/>
</dbReference>
<dbReference type="Pfam" id="PF00171">
    <property type="entry name" value="Aldedh"/>
    <property type="match status" value="1"/>
</dbReference>
<dbReference type="SUPFAM" id="SSF53720">
    <property type="entry name" value="ALDH-like"/>
    <property type="match status" value="1"/>
</dbReference>
<dbReference type="PROSITE" id="PS00070">
    <property type="entry name" value="ALDEHYDE_DEHYDR_CYS"/>
    <property type="match status" value="1"/>
</dbReference>
<proteinExistence type="inferred from homology"/>
<sequence length="484" mass="52593">MITTNAKKMMNHIDGEWVNSLGAESEEVVNPANGNVIAYAPLSVRADVDRAVQAAKHAYQTWSLVPVPNRARLLYKYLQLLQEQKEQLADIITTENGKTLKDARGEVQRGIEVVELATATPTLMMGESLPAIAGGIDGSIWRYPLGVVAGITPFNFPMMVPLWMFPLAIACGNTFVLKPSERTPILAGKLVELFYEAGFPKGVLNLVHGGKDVVNGILENDDIKAVSFVGSEPVAKYVYQTGTANGKRVQALAGAKNHAIVMPDCHLEKTVQGIIGAAFGSSGERCMACSVAAVVDDIADDFMEMLVSETRKLKTGDGRSEDHFVGPLIREVHKQRVLDYIDSGIKEGAALAVDGRNPDVREGYFVGATIFDHVTPEMKIWQDEIFAPVLSVVRVQDLDEGIELANQSKFANGAVIYTSSGKSAQQFRDKIDAGMIGVNVNVPAPMAFFSFAGNKASFYGDLGTNGKDGVQFYTRKKVVTERWF</sequence>
<feature type="chain" id="PRO_0000352329" description="Malonate-semialdehyde dehydrogenase 1">
    <location>
        <begin position="1"/>
        <end position="484"/>
    </location>
</feature>
<feature type="active site" description="Nucleophile" evidence="1">
    <location>
        <position position="286"/>
    </location>
</feature>
<feature type="binding site" evidence="1">
    <location>
        <position position="154"/>
    </location>
    <ligand>
        <name>NAD(+)</name>
        <dbReference type="ChEBI" id="CHEBI:57540"/>
    </ligand>
</feature>
<feature type="binding site" evidence="1">
    <location>
        <position position="178"/>
    </location>
    <ligand>
        <name>NAD(+)</name>
        <dbReference type="ChEBI" id="CHEBI:57540"/>
    </ligand>
</feature>
<feature type="binding site" evidence="1">
    <location>
        <position position="181"/>
    </location>
    <ligand>
        <name>NAD(+)</name>
        <dbReference type="ChEBI" id="CHEBI:57540"/>
    </ligand>
</feature>
<feature type="binding site" evidence="1">
    <location>
        <position position="182"/>
    </location>
    <ligand>
        <name>NAD(+)</name>
        <dbReference type="ChEBI" id="CHEBI:57540"/>
    </ligand>
</feature>
<feature type="binding site" evidence="1">
    <location>
        <position position="231"/>
    </location>
    <ligand>
        <name>NAD(+)</name>
        <dbReference type="ChEBI" id="CHEBI:57540"/>
    </ligand>
</feature>
<feature type="binding site" evidence="1">
    <location>
        <position position="384"/>
    </location>
    <ligand>
        <name>NAD(+)</name>
        <dbReference type="ChEBI" id="CHEBI:57540"/>
    </ligand>
</feature>
<reference key="1">
    <citation type="journal article" date="2004" name="J. Mol. Microbiol. Biotechnol.">
        <title>The complete genome sequence of Bacillus licheniformis DSM13, an organism with great industrial potential.</title>
        <authorList>
            <person name="Veith B."/>
            <person name="Herzberg C."/>
            <person name="Steckel S."/>
            <person name="Feesche J."/>
            <person name="Maurer K.H."/>
            <person name="Ehrenreich P."/>
            <person name="Baeumer S."/>
            <person name="Henne A."/>
            <person name="Liesegang H."/>
            <person name="Merkl R."/>
            <person name="Ehrenreich A."/>
            <person name="Gottschalk G."/>
        </authorList>
    </citation>
    <scope>NUCLEOTIDE SEQUENCE [LARGE SCALE GENOMIC DNA]</scope>
    <source>
        <strain>ATCC 14580 / DSM 13 / JCM 2505 / CCUG 7422 / NBRC 12200 / NCIMB 9375 / NCTC 10341 / NRRL NRS-1264 / Gibson 46</strain>
    </source>
</reference>
<reference key="2">
    <citation type="journal article" date="2004" name="Genome Biol.">
        <title>Complete genome sequence of the industrial bacterium Bacillus licheniformis and comparisons with closely related Bacillus species.</title>
        <authorList>
            <person name="Rey M.W."/>
            <person name="Ramaiya P."/>
            <person name="Nelson B.A."/>
            <person name="Brody-Karpin S.D."/>
            <person name="Zaretsky E.J."/>
            <person name="Tang M."/>
            <person name="Lopez de Leon A."/>
            <person name="Xiang H."/>
            <person name="Gusti V."/>
            <person name="Clausen I.G."/>
            <person name="Olsen P.B."/>
            <person name="Rasmussen M.D."/>
            <person name="Andersen J.T."/>
            <person name="Joergensen P.L."/>
            <person name="Larsen T.S."/>
            <person name="Sorokin A."/>
            <person name="Bolotin A."/>
            <person name="Lapidus A."/>
            <person name="Galleron N."/>
            <person name="Ehrlich S.D."/>
            <person name="Berka R.M."/>
        </authorList>
    </citation>
    <scope>NUCLEOTIDE SEQUENCE [LARGE SCALE GENOMIC DNA]</scope>
    <source>
        <strain>ATCC 14580 / DSM 13 / JCM 2505 / CCUG 7422 / NBRC 12200 / NCIMB 9375 / NCTC 10341 / NRRL NRS-1264 / Gibson 46</strain>
    </source>
</reference>
<gene>
    <name evidence="1" type="primary">iolA1</name>
    <name type="ordered locus">BLi02104</name>
    <name type="ordered locus">BL00293</name>
</gene>
<comment type="function">
    <text evidence="1">Catalyzes the oxidation of malonate semialdehyde (MSA) and methylmalonate semialdehyde (MMSA) into acetyl-CoA and propanoyl-CoA, respectively. Is involved in a myo-inositol catabolic pathway. Bicarbonate, and not CO2, is the end-product of the enzymatic reaction.</text>
</comment>
<comment type="catalytic activity">
    <reaction evidence="1">
        <text>3-oxopropanoate + NAD(+) + CoA + H2O = hydrogencarbonate + acetyl-CoA + NADH + H(+)</text>
        <dbReference type="Rhea" id="RHEA:76615"/>
        <dbReference type="ChEBI" id="CHEBI:15377"/>
        <dbReference type="ChEBI" id="CHEBI:15378"/>
        <dbReference type="ChEBI" id="CHEBI:17544"/>
        <dbReference type="ChEBI" id="CHEBI:33190"/>
        <dbReference type="ChEBI" id="CHEBI:57287"/>
        <dbReference type="ChEBI" id="CHEBI:57288"/>
        <dbReference type="ChEBI" id="CHEBI:57540"/>
        <dbReference type="ChEBI" id="CHEBI:57945"/>
        <dbReference type="EC" id="1.2.1.27"/>
    </reaction>
    <physiologicalReaction direction="left-to-right" evidence="1">
        <dbReference type="Rhea" id="RHEA:76616"/>
    </physiologicalReaction>
</comment>
<comment type="catalytic activity">
    <reaction evidence="1">
        <text>2-methyl-3-oxopropanoate + NAD(+) + CoA + H2O = propanoyl-CoA + hydrogencarbonate + NADH + H(+)</text>
        <dbReference type="Rhea" id="RHEA:20804"/>
        <dbReference type="ChEBI" id="CHEBI:15377"/>
        <dbReference type="ChEBI" id="CHEBI:15378"/>
        <dbReference type="ChEBI" id="CHEBI:17544"/>
        <dbReference type="ChEBI" id="CHEBI:57287"/>
        <dbReference type="ChEBI" id="CHEBI:57392"/>
        <dbReference type="ChEBI" id="CHEBI:57540"/>
        <dbReference type="ChEBI" id="CHEBI:57700"/>
        <dbReference type="ChEBI" id="CHEBI:57945"/>
        <dbReference type="EC" id="1.2.1.27"/>
    </reaction>
    <physiologicalReaction direction="left-to-right" evidence="1">
        <dbReference type="Rhea" id="RHEA:20805"/>
    </physiologicalReaction>
</comment>
<comment type="pathway">
    <text evidence="1">Polyol metabolism; myo-inositol degradation into acetyl-CoA; acetyl-CoA from myo-inositol: step 7/7.</text>
</comment>
<comment type="subunit">
    <text evidence="1">Homotetramer.</text>
</comment>
<comment type="similarity">
    <text evidence="1">Belongs to the aldehyde dehydrogenase family. IolA subfamily.</text>
</comment>
<name>IOLA1_BACLD</name>
<accession>Q65IX1</accession>
<accession>Q62UD1</accession>
<protein>
    <recommendedName>
        <fullName evidence="1">Malonate-semialdehyde dehydrogenase 1</fullName>
        <shortName evidence="1">MSA dehydrogenase 1</shortName>
        <ecNumber evidence="1">1.2.1.27</ecNumber>
    </recommendedName>
    <alternativeName>
        <fullName evidence="1">Methylmalonate-semialdehyde dehydrogenase 1</fullName>
        <shortName evidence="1">MMSA dehydrogenase 1</shortName>
        <shortName evidence="1">MSDH 1</shortName>
    </alternativeName>
</protein>
<evidence type="ECO:0000255" key="1">
    <source>
        <dbReference type="HAMAP-Rule" id="MF_01670"/>
    </source>
</evidence>
<keyword id="KW-0520">NAD</keyword>
<keyword id="KW-0560">Oxidoreductase</keyword>
<keyword id="KW-1185">Reference proteome</keyword>
<organism>
    <name type="scientific">Bacillus licheniformis (strain ATCC 14580 / DSM 13 / JCM 2505 / CCUG 7422 / NBRC 12200 / NCIMB 9375 / NCTC 10341 / NRRL NRS-1264 / Gibson 46)</name>
    <dbReference type="NCBI Taxonomy" id="279010"/>
    <lineage>
        <taxon>Bacteria</taxon>
        <taxon>Bacillati</taxon>
        <taxon>Bacillota</taxon>
        <taxon>Bacilli</taxon>
        <taxon>Bacillales</taxon>
        <taxon>Bacillaceae</taxon>
        <taxon>Bacillus</taxon>
    </lineage>
</organism>